<gene>
    <name type="primary">fldA</name>
    <name type="ordered locus">SF0609</name>
    <name type="ordered locus">S0620</name>
</gene>
<sequence>MAIHGIFFGSDTGNTENIAKMIQKQLGKDVADVHDIAKSSKEDLEAYDILLLGIPTWYYGEAQCDWDDFFPTLEEIDFNGKLVALFGCGDQEDYAEYFCDALGTIRDIIEPRGATIDADWPTAGYHFQASKGLADDDHFVGLAIDEDRHPELTADRVEKWVKQISEELHLDEILNA</sequence>
<protein>
    <recommendedName>
        <fullName>Flavodoxin 1</fullName>
    </recommendedName>
</protein>
<name>FLAV_SHIFL</name>
<reference key="1">
    <citation type="journal article" date="2002" name="Nucleic Acids Res.">
        <title>Genome sequence of Shigella flexneri 2a: insights into pathogenicity through comparison with genomes of Escherichia coli K12 and O157.</title>
        <authorList>
            <person name="Jin Q."/>
            <person name="Yuan Z."/>
            <person name="Xu J."/>
            <person name="Wang Y."/>
            <person name="Shen Y."/>
            <person name="Lu W."/>
            <person name="Wang J."/>
            <person name="Liu H."/>
            <person name="Yang J."/>
            <person name="Yang F."/>
            <person name="Zhang X."/>
            <person name="Zhang J."/>
            <person name="Yang G."/>
            <person name="Wu H."/>
            <person name="Qu D."/>
            <person name="Dong J."/>
            <person name="Sun L."/>
            <person name="Xue Y."/>
            <person name="Zhao A."/>
            <person name="Gao Y."/>
            <person name="Zhu J."/>
            <person name="Kan B."/>
            <person name="Ding K."/>
            <person name="Chen S."/>
            <person name="Cheng H."/>
            <person name="Yao Z."/>
            <person name="He B."/>
            <person name="Chen R."/>
            <person name="Ma D."/>
            <person name="Qiang B."/>
            <person name="Wen Y."/>
            <person name="Hou Y."/>
            <person name="Yu J."/>
        </authorList>
    </citation>
    <scope>NUCLEOTIDE SEQUENCE [LARGE SCALE GENOMIC DNA]</scope>
    <source>
        <strain>301 / Serotype 2a</strain>
    </source>
</reference>
<reference key="2">
    <citation type="journal article" date="2003" name="Infect. Immun.">
        <title>Complete genome sequence and comparative genomics of Shigella flexneri serotype 2a strain 2457T.</title>
        <authorList>
            <person name="Wei J."/>
            <person name="Goldberg M.B."/>
            <person name="Burland V."/>
            <person name="Venkatesan M.M."/>
            <person name="Deng W."/>
            <person name="Fournier G."/>
            <person name="Mayhew G.F."/>
            <person name="Plunkett G. III"/>
            <person name="Rose D.J."/>
            <person name="Darling A."/>
            <person name="Mau B."/>
            <person name="Perna N.T."/>
            <person name="Payne S.M."/>
            <person name="Runyen-Janecky L.J."/>
            <person name="Zhou S."/>
            <person name="Schwartz D.C."/>
            <person name="Blattner F.R."/>
        </authorList>
    </citation>
    <scope>NUCLEOTIDE SEQUENCE [LARGE SCALE GENOMIC DNA]</scope>
    <source>
        <strain>ATCC 700930 / 2457T / Serotype 2a</strain>
    </source>
</reference>
<evidence type="ECO:0000250" key="1"/>
<evidence type="ECO:0000255" key="2">
    <source>
        <dbReference type="PROSITE-ProRule" id="PRU00088"/>
    </source>
</evidence>
<evidence type="ECO:0000305" key="3"/>
<proteinExistence type="inferred from homology"/>
<organism>
    <name type="scientific">Shigella flexneri</name>
    <dbReference type="NCBI Taxonomy" id="623"/>
    <lineage>
        <taxon>Bacteria</taxon>
        <taxon>Pseudomonadati</taxon>
        <taxon>Pseudomonadota</taxon>
        <taxon>Gammaproteobacteria</taxon>
        <taxon>Enterobacterales</taxon>
        <taxon>Enterobacteriaceae</taxon>
        <taxon>Shigella</taxon>
    </lineage>
</organism>
<accession>Q83S80</accession>
<dbReference type="EMBL" id="AE005674">
    <property type="protein sequence ID" value="AAN42247.2"/>
    <property type="molecule type" value="Genomic_DNA"/>
</dbReference>
<dbReference type="EMBL" id="AE014073">
    <property type="protein sequence ID" value="AAP16118.1"/>
    <property type="molecule type" value="Genomic_DNA"/>
</dbReference>
<dbReference type="RefSeq" id="NP_706540.2">
    <property type="nucleotide sequence ID" value="NC_004337.2"/>
</dbReference>
<dbReference type="RefSeq" id="WP_011069281.1">
    <property type="nucleotide sequence ID" value="NZ_CP123365.1"/>
</dbReference>
<dbReference type="SMR" id="Q83S80"/>
<dbReference type="STRING" id="198214.SF0609"/>
<dbReference type="PaxDb" id="198214-SF0609"/>
<dbReference type="GeneID" id="1026090"/>
<dbReference type="KEGG" id="sfl:SF0609"/>
<dbReference type="KEGG" id="sfx:S0620"/>
<dbReference type="PATRIC" id="fig|198214.7.peg.710"/>
<dbReference type="HOGENOM" id="CLU_051402_1_1_6"/>
<dbReference type="Proteomes" id="UP000001006">
    <property type="component" value="Chromosome"/>
</dbReference>
<dbReference type="Proteomes" id="UP000002673">
    <property type="component" value="Chromosome"/>
</dbReference>
<dbReference type="GO" id="GO:0009055">
    <property type="term" value="F:electron transfer activity"/>
    <property type="evidence" value="ECO:0007669"/>
    <property type="project" value="InterPro"/>
</dbReference>
<dbReference type="GO" id="GO:0010181">
    <property type="term" value="F:FMN binding"/>
    <property type="evidence" value="ECO:0007669"/>
    <property type="project" value="InterPro"/>
</dbReference>
<dbReference type="FunFam" id="3.40.50.360:FF:000002">
    <property type="entry name" value="Flavodoxin"/>
    <property type="match status" value="1"/>
</dbReference>
<dbReference type="Gene3D" id="3.40.50.360">
    <property type="match status" value="1"/>
</dbReference>
<dbReference type="InterPro" id="IPR050619">
    <property type="entry name" value="Flavodoxin"/>
</dbReference>
<dbReference type="InterPro" id="IPR008254">
    <property type="entry name" value="Flavodoxin/NO_synth"/>
</dbReference>
<dbReference type="InterPro" id="IPR001226">
    <property type="entry name" value="Flavodoxin_CS"/>
</dbReference>
<dbReference type="InterPro" id="IPR010086">
    <property type="entry name" value="Flavodoxin_lc"/>
</dbReference>
<dbReference type="InterPro" id="IPR029039">
    <property type="entry name" value="Flavoprotein-like_sf"/>
</dbReference>
<dbReference type="NCBIfam" id="TIGR01752">
    <property type="entry name" value="flav_long"/>
    <property type="match status" value="1"/>
</dbReference>
<dbReference type="NCBIfam" id="NF006735">
    <property type="entry name" value="PRK09267.1-1"/>
    <property type="match status" value="1"/>
</dbReference>
<dbReference type="NCBIfam" id="NF006737">
    <property type="entry name" value="PRK09267.1-3"/>
    <property type="match status" value="1"/>
</dbReference>
<dbReference type="NCBIfam" id="NF006739">
    <property type="entry name" value="PRK09267.1-5"/>
    <property type="match status" value="1"/>
</dbReference>
<dbReference type="PANTHER" id="PTHR42809:SF1">
    <property type="entry name" value="FLAVODOXIN 1"/>
    <property type="match status" value="1"/>
</dbReference>
<dbReference type="PANTHER" id="PTHR42809">
    <property type="entry name" value="FLAVODOXIN 2"/>
    <property type="match status" value="1"/>
</dbReference>
<dbReference type="Pfam" id="PF00258">
    <property type="entry name" value="Flavodoxin_1"/>
    <property type="match status" value="1"/>
</dbReference>
<dbReference type="PIRSF" id="PIRSF038996">
    <property type="entry name" value="FldA"/>
    <property type="match status" value="1"/>
</dbReference>
<dbReference type="SUPFAM" id="SSF52218">
    <property type="entry name" value="Flavoproteins"/>
    <property type="match status" value="1"/>
</dbReference>
<dbReference type="PROSITE" id="PS00201">
    <property type="entry name" value="FLAVODOXIN"/>
    <property type="match status" value="1"/>
</dbReference>
<dbReference type="PROSITE" id="PS50902">
    <property type="entry name" value="FLAVODOXIN_LIKE"/>
    <property type="match status" value="1"/>
</dbReference>
<feature type="initiator methionine" description="Removed" evidence="1">
    <location>
        <position position="1"/>
    </location>
</feature>
<feature type="chain" id="PRO_0000171642" description="Flavodoxin 1">
    <location>
        <begin position="2"/>
        <end position="176"/>
    </location>
</feature>
<feature type="domain" description="Flavodoxin-like" evidence="2">
    <location>
        <begin position="4"/>
        <end position="165"/>
    </location>
</feature>
<feature type="sequence conflict" description="In Ref. 2; AAP16118." evidence="3" ref="2">
    <original>H</original>
    <variation>T</variation>
    <location>
        <position position="4"/>
    </location>
</feature>
<feature type="sequence conflict" description="In Ref. 2; AAP16118." evidence="3" ref="2">
    <original>DAD</original>
    <variation>VGH</variation>
    <location>
        <begin position="117"/>
        <end position="119"/>
    </location>
</feature>
<feature type="sequence conflict" description="In Ref. 2; AAP16118." evidence="3" ref="2">
    <original>Q</original>
    <variation>E</variation>
    <location>
        <position position="128"/>
    </location>
</feature>
<feature type="sequence conflict" description="In Ref. 2; AAP16118." evidence="3" ref="2">
    <original>H</original>
    <variation>Q</variation>
    <location>
        <position position="149"/>
    </location>
</feature>
<feature type="sequence conflict" description="In Ref. 2; AAP16118." evidence="3" ref="2">
    <original>D</original>
    <variation>E</variation>
    <location>
        <position position="155"/>
    </location>
</feature>
<comment type="function">
    <text evidence="3">Low-potential electron donor to a number of redox enzymes.</text>
</comment>
<comment type="cofactor">
    <cofactor evidence="1">
        <name>FMN</name>
        <dbReference type="ChEBI" id="CHEBI:58210"/>
    </cofactor>
</comment>
<comment type="similarity">
    <text evidence="3">Belongs to the flavodoxin family.</text>
</comment>
<keyword id="KW-0249">Electron transport</keyword>
<keyword id="KW-0285">Flavoprotein</keyword>
<keyword id="KW-0288">FMN</keyword>
<keyword id="KW-1185">Reference proteome</keyword>
<keyword id="KW-0813">Transport</keyword>